<dbReference type="EMBL" id="V01542">
    <property type="protein sequence ID" value="CAA24783.1"/>
    <property type="molecule type" value="mRNA"/>
</dbReference>
<dbReference type="EMBL" id="J00749">
    <property type="protein sequence ID" value="AAA96703.1"/>
    <property type="molecule type" value="Genomic_DNA"/>
</dbReference>
<dbReference type="EMBL" id="D00576">
    <property type="protein sequence ID" value="BAA00454.1"/>
    <property type="molecule type" value="mRNA"/>
</dbReference>
<dbReference type="PIR" id="A01498">
    <property type="entry name" value="UTRTB"/>
</dbReference>
<dbReference type="RefSeq" id="NP_001029147.1">
    <property type="nucleotide sequence ID" value="NM_001033975.1"/>
</dbReference>
<dbReference type="RefSeq" id="NP_036990.1">
    <property type="nucleotide sequence ID" value="NM_012858.2"/>
</dbReference>
<dbReference type="SMR" id="P01230"/>
<dbReference type="FunCoup" id="P01230">
    <property type="interactions" value="134"/>
</dbReference>
<dbReference type="STRING" id="10116.ENSRNOP00000060360"/>
<dbReference type="GlyCosmos" id="P01230">
    <property type="glycosylation" value="1 site, No reported glycans"/>
</dbReference>
<dbReference type="GlyGen" id="P01230">
    <property type="glycosylation" value="1 site"/>
</dbReference>
<dbReference type="PaxDb" id="10116-ENSRNOP00000060360"/>
<dbReference type="Ensembl" id="ENSRNOT00000067468.4">
    <property type="protein sequence ID" value="ENSRNOP00000060360.3"/>
    <property type="gene ID" value="ENSRNOG00000063034.1"/>
</dbReference>
<dbReference type="GeneID" id="25329"/>
<dbReference type="KEGG" id="rno:25329"/>
<dbReference type="UCSC" id="RGD:3006">
    <property type="organism name" value="rat"/>
</dbReference>
<dbReference type="AGR" id="RGD:3006"/>
<dbReference type="CTD" id="3972"/>
<dbReference type="RGD" id="3006">
    <property type="gene designation" value="Lhb"/>
</dbReference>
<dbReference type="eggNOG" id="ENOG502S49V">
    <property type="taxonomic scope" value="Eukaryota"/>
</dbReference>
<dbReference type="GeneTree" id="ENSGT00940000161285"/>
<dbReference type="InParanoid" id="P01230"/>
<dbReference type="OMA" id="YHELHFA"/>
<dbReference type="OrthoDB" id="8453657at2759"/>
<dbReference type="PhylomeDB" id="P01230"/>
<dbReference type="TreeFam" id="TF332940"/>
<dbReference type="Reactome" id="R-RNO-193048">
    <property type="pathway name" value="Androgen biosynthesis"/>
</dbReference>
<dbReference type="Reactome" id="R-RNO-193993">
    <property type="pathway name" value="Mineralocorticoid biosynthesis"/>
</dbReference>
<dbReference type="Reactome" id="R-RNO-209822">
    <property type="pathway name" value="Glycoprotein hormones"/>
</dbReference>
<dbReference type="Reactome" id="R-RNO-375281">
    <property type="pathway name" value="Hormone ligand-binding receptors"/>
</dbReference>
<dbReference type="Reactome" id="R-RNO-8866910">
    <property type="pathway name" value="TFAP2 (AP-2) family regulates transcription of growth factors and their receptors"/>
</dbReference>
<dbReference type="PRO" id="PR:P01230"/>
<dbReference type="Proteomes" id="UP000002494">
    <property type="component" value="Chromosome 1"/>
</dbReference>
<dbReference type="Bgee" id="ENSRNOG00000047040">
    <property type="expression patterns" value="Expressed in testis and 15 other cell types or tissues"/>
</dbReference>
<dbReference type="ExpressionAtlas" id="P01230">
    <property type="expression patterns" value="baseline and differential"/>
</dbReference>
<dbReference type="GO" id="GO:0005737">
    <property type="term" value="C:cytoplasm"/>
    <property type="evidence" value="ECO:0000266"/>
    <property type="project" value="RGD"/>
</dbReference>
<dbReference type="GO" id="GO:0005615">
    <property type="term" value="C:extracellular space"/>
    <property type="evidence" value="ECO:0000318"/>
    <property type="project" value="GO_Central"/>
</dbReference>
<dbReference type="GO" id="GO:0005179">
    <property type="term" value="F:hormone activity"/>
    <property type="evidence" value="ECO:0007669"/>
    <property type="project" value="UniProtKB-KW"/>
</dbReference>
<dbReference type="GO" id="GO:0007186">
    <property type="term" value="P:G protein-coupled receptor signaling pathway"/>
    <property type="evidence" value="ECO:0000318"/>
    <property type="project" value="GO_Central"/>
</dbReference>
<dbReference type="GO" id="GO:0035471">
    <property type="term" value="P:luteinizing hormone signaling pathway involved in ovarian follicle development"/>
    <property type="evidence" value="ECO:0000266"/>
    <property type="project" value="RGD"/>
</dbReference>
<dbReference type="CDD" id="cd00069">
    <property type="entry name" value="GHB_like"/>
    <property type="match status" value="1"/>
</dbReference>
<dbReference type="FunFam" id="2.10.90.10:FF:000007">
    <property type="entry name" value="Luteinizing hormone beta subunit"/>
    <property type="match status" value="1"/>
</dbReference>
<dbReference type="Gene3D" id="2.10.90.10">
    <property type="entry name" value="Cystine-knot cytokines"/>
    <property type="match status" value="1"/>
</dbReference>
<dbReference type="InterPro" id="IPR029034">
    <property type="entry name" value="Cystine-knot_cytokine"/>
</dbReference>
<dbReference type="InterPro" id="IPR006208">
    <property type="entry name" value="Glyco_hormone_CN"/>
</dbReference>
<dbReference type="InterPro" id="IPR001545">
    <property type="entry name" value="Gonadotropin_bsu"/>
</dbReference>
<dbReference type="InterPro" id="IPR018245">
    <property type="entry name" value="Gonadotropin_bsu_CS"/>
</dbReference>
<dbReference type="PANTHER" id="PTHR11515">
    <property type="entry name" value="GLYCOPROTEIN HORMONE BETA CHAIN"/>
    <property type="match status" value="1"/>
</dbReference>
<dbReference type="PANTHER" id="PTHR11515:SF11">
    <property type="entry name" value="LUTROPIN SUBUNIT BETA"/>
    <property type="match status" value="1"/>
</dbReference>
<dbReference type="Pfam" id="PF00007">
    <property type="entry name" value="Cys_knot"/>
    <property type="match status" value="1"/>
</dbReference>
<dbReference type="SMART" id="SM00068">
    <property type="entry name" value="GHB"/>
    <property type="match status" value="1"/>
</dbReference>
<dbReference type="SUPFAM" id="SSF57501">
    <property type="entry name" value="Cystine-knot cytokines"/>
    <property type="match status" value="1"/>
</dbReference>
<dbReference type="PROSITE" id="PS00261">
    <property type="entry name" value="GLYCO_HORMONE_BETA_1"/>
    <property type="match status" value="1"/>
</dbReference>
<dbReference type="PROSITE" id="PS00689">
    <property type="entry name" value="GLYCO_HORMONE_BETA_2"/>
    <property type="match status" value="1"/>
</dbReference>
<reference key="1">
    <citation type="journal article" date="1983" name="Proc. Natl. Acad. Sci. U.S.A.">
        <title>Nucleotide sequence of the cDNA encoding the precursor of the beta subunit of rat lutropin.</title>
        <authorList>
            <person name="Chin W.W."/>
            <person name="Godine J.E."/>
            <person name="Klein D.R."/>
            <person name="Chang A.S."/>
            <person name="Tan L.K."/>
            <person name="Habener J.F."/>
        </authorList>
    </citation>
    <scope>NUCLEOTIDE SEQUENCE [MRNA]</scope>
    <source>
        <strain>Sprague-Dawley</strain>
    </source>
</reference>
<reference key="2">
    <citation type="journal article" date="1984" name="J. Biol. Chem.">
        <title>The gene encoding the beta-subunit of rat luteinizing hormone. Analysis of gene structure and evolution of nucleotide sequence.</title>
        <authorList>
            <person name="Jameson L."/>
            <person name="Chin W.W."/>
            <person name="Hollenberg A.N."/>
            <person name="Chang A.S."/>
            <person name="Habener J.F."/>
        </authorList>
    </citation>
    <scope>NUCLEOTIDE SEQUENCE [GENOMIC DNA]</scope>
</reference>
<reference key="3">
    <citation type="journal article" date="1990" name="Zool. Sci.">
        <title>Strain difference in nucleotide sequences of rat glycoprotein hormone subunit cDNAs and gene fragment.</title>
        <authorList>
            <person name="Kato Y."/>
            <person name="Ezashi T."/>
            <person name="Hirai T."/>
            <person name="Kato T."/>
        </authorList>
    </citation>
    <scope>NUCLEOTIDE SEQUENCE [MRNA] OF 4-141</scope>
    <source>
        <strain>Wistar Imamichi</strain>
        <tissue>Pituitary anterior lobe</tissue>
    </source>
</reference>
<sequence length="141" mass="15177">MERLQGLLLWLLLSPSVVWASRGPLRPLCRPVNATLAAENEFCPVCITFTTSICAGYCPSMVRVLPAALPPVPQPVCTYRELRFASVRLPGCPPGVDPIVSFPVALSCRCGPCRLSSSDCGGPRTQPMTCDLPHLPGLLLF</sequence>
<accession>P01230</accession>
<name>LSHB_RAT</name>
<protein>
    <recommendedName>
        <fullName>Lutropin subunit beta</fullName>
        <shortName>Lutropin beta chain</shortName>
    </recommendedName>
    <alternativeName>
        <fullName>Luteinizing hormone subunit beta</fullName>
        <shortName>LH-B</shortName>
        <shortName>LSH-B</shortName>
        <shortName>LSH-beta</shortName>
    </alternativeName>
</protein>
<organism>
    <name type="scientific">Rattus norvegicus</name>
    <name type="common">Rat</name>
    <dbReference type="NCBI Taxonomy" id="10116"/>
    <lineage>
        <taxon>Eukaryota</taxon>
        <taxon>Metazoa</taxon>
        <taxon>Chordata</taxon>
        <taxon>Craniata</taxon>
        <taxon>Vertebrata</taxon>
        <taxon>Euteleostomi</taxon>
        <taxon>Mammalia</taxon>
        <taxon>Eutheria</taxon>
        <taxon>Euarchontoglires</taxon>
        <taxon>Glires</taxon>
        <taxon>Rodentia</taxon>
        <taxon>Myomorpha</taxon>
        <taxon>Muroidea</taxon>
        <taxon>Muridae</taxon>
        <taxon>Murinae</taxon>
        <taxon>Rattus</taxon>
    </lineage>
</organism>
<evidence type="ECO:0000250" key="1"/>
<evidence type="ECO:0000305" key="2"/>
<feature type="signal peptide">
    <location>
        <begin position="1"/>
        <end position="20"/>
    </location>
</feature>
<feature type="chain" id="PRO_0000011733" description="Lutropin subunit beta">
    <location>
        <begin position="21"/>
        <end position="141"/>
    </location>
</feature>
<feature type="glycosylation site" description="N-linked (GlcNAc...) asparagine" evidence="2">
    <location>
        <position position="33"/>
    </location>
</feature>
<feature type="disulfide bond" evidence="1">
    <location>
        <begin position="29"/>
        <end position="77"/>
    </location>
</feature>
<feature type="disulfide bond" evidence="1">
    <location>
        <begin position="43"/>
        <end position="92"/>
    </location>
</feature>
<feature type="disulfide bond" evidence="1">
    <location>
        <begin position="46"/>
        <end position="130"/>
    </location>
</feature>
<feature type="disulfide bond" evidence="1">
    <location>
        <begin position="54"/>
        <end position="108"/>
    </location>
</feature>
<feature type="disulfide bond" evidence="1">
    <location>
        <begin position="58"/>
        <end position="110"/>
    </location>
</feature>
<feature type="disulfide bond" evidence="1">
    <location>
        <begin position="113"/>
        <end position="120"/>
    </location>
</feature>
<comment type="function">
    <text>Promotes spermatogenesis and ovulation by stimulating the testes and ovaries to synthesize steroids.</text>
</comment>
<comment type="subunit">
    <text>Heterodimer of a common alpha chain and a unique beta chain which confers biological specificity to thyrotropin, lutropin, follitropin and gonadotropin.</text>
</comment>
<comment type="subcellular location">
    <subcellularLocation>
        <location>Secreted</location>
    </subcellularLocation>
</comment>
<comment type="similarity">
    <text evidence="2">Belongs to the glycoprotein hormones subunit beta family.</text>
</comment>
<gene>
    <name type="primary">Lhb</name>
</gene>
<proteinExistence type="evidence at transcript level"/>
<keyword id="KW-1015">Disulfide bond</keyword>
<keyword id="KW-0325">Glycoprotein</keyword>
<keyword id="KW-0372">Hormone</keyword>
<keyword id="KW-1185">Reference proteome</keyword>
<keyword id="KW-0964">Secreted</keyword>
<keyword id="KW-0732">Signal</keyword>